<proteinExistence type="inferred from homology"/>
<keyword id="KW-0963">Cytoplasm</keyword>
<keyword id="KW-0444">Lipid biosynthesis</keyword>
<keyword id="KW-0443">Lipid metabolism</keyword>
<keyword id="KW-0594">Phospholipid biosynthesis</keyword>
<keyword id="KW-1208">Phospholipid metabolism</keyword>
<keyword id="KW-1185">Reference proteome</keyword>
<keyword id="KW-0808">Transferase</keyword>
<feature type="chain" id="PRO_1000001773" description="Phosphate acyltransferase">
    <location>
        <begin position="1"/>
        <end position="365"/>
    </location>
</feature>
<name>PLSX_JANSC</name>
<comment type="function">
    <text evidence="1">Catalyzes the reversible formation of acyl-phosphate (acyl-PO(4)) from acyl-[acyl-carrier-protein] (acyl-ACP). This enzyme utilizes acyl-ACP as fatty acyl donor, but not acyl-CoA.</text>
</comment>
<comment type="catalytic activity">
    <reaction evidence="1">
        <text>a fatty acyl-[ACP] + phosphate = an acyl phosphate + holo-[ACP]</text>
        <dbReference type="Rhea" id="RHEA:42292"/>
        <dbReference type="Rhea" id="RHEA-COMP:9685"/>
        <dbReference type="Rhea" id="RHEA-COMP:14125"/>
        <dbReference type="ChEBI" id="CHEBI:43474"/>
        <dbReference type="ChEBI" id="CHEBI:59918"/>
        <dbReference type="ChEBI" id="CHEBI:64479"/>
        <dbReference type="ChEBI" id="CHEBI:138651"/>
        <dbReference type="EC" id="2.3.1.274"/>
    </reaction>
</comment>
<comment type="pathway">
    <text evidence="1">Lipid metabolism; phospholipid metabolism.</text>
</comment>
<comment type="subunit">
    <text evidence="1">Homodimer. Probably interacts with PlsY.</text>
</comment>
<comment type="subcellular location">
    <subcellularLocation>
        <location evidence="1">Cytoplasm</location>
    </subcellularLocation>
    <text evidence="1">Associated with the membrane possibly through PlsY.</text>
</comment>
<comment type="similarity">
    <text evidence="1">Belongs to the PlsX family.</text>
</comment>
<organism>
    <name type="scientific">Jannaschia sp. (strain CCS1)</name>
    <dbReference type="NCBI Taxonomy" id="290400"/>
    <lineage>
        <taxon>Bacteria</taxon>
        <taxon>Pseudomonadati</taxon>
        <taxon>Pseudomonadota</taxon>
        <taxon>Alphaproteobacteria</taxon>
        <taxon>Rhodobacterales</taxon>
        <taxon>Roseobacteraceae</taxon>
        <taxon>Jannaschia</taxon>
    </lineage>
</organism>
<gene>
    <name evidence="1" type="primary">plsX</name>
    <name type="ordered locus">Jann_1785</name>
</gene>
<protein>
    <recommendedName>
        <fullName evidence="1">Phosphate acyltransferase</fullName>
        <ecNumber evidence="1">2.3.1.274</ecNumber>
    </recommendedName>
    <alternativeName>
        <fullName evidence="1">Acyl-ACP phosphotransacylase</fullName>
    </alternativeName>
    <alternativeName>
        <fullName evidence="1">Acyl-[acyl-carrier-protein]--phosphate acyltransferase</fullName>
    </alternativeName>
    <alternativeName>
        <fullName evidence="1">Phosphate-acyl-ACP acyltransferase</fullName>
    </alternativeName>
</protein>
<accession>Q28RG0</accession>
<dbReference type="EC" id="2.3.1.274" evidence="1"/>
<dbReference type="EMBL" id="CP000264">
    <property type="protein sequence ID" value="ABD54702.1"/>
    <property type="molecule type" value="Genomic_DNA"/>
</dbReference>
<dbReference type="RefSeq" id="WP_011454907.1">
    <property type="nucleotide sequence ID" value="NC_007802.1"/>
</dbReference>
<dbReference type="SMR" id="Q28RG0"/>
<dbReference type="STRING" id="290400.Jann_1785"/>
<dbReference type="KEGG" id="jan:Jann_1785"/>
<dbReference type="eggNOG" id="COG0416">
    <property type="taxonomic scope" value="Bacteria"/>
</dbReference>
<dbReference type="HOGENOM" id="CLU_039379_1_0_5"/>
<dbReference type="OrthoDB" id="9806408at2"/>
<dbReference type="UniPathway" id="UPA00085"/>
<dbReference type="Proteomes" id="UP000008326">
    <property type="component" value="Chromosome"/>
</dbReference>
<dbReference type="GO" id="GO:0005737">
    <property type="term" value="C:cytoplasm"/>
    <property type="evidence" value="ECO:0007669"/>
    <property type="project" value="UniProtKB-SubCell"/>
</dbReference>
<dbReference type="GO" id="GO:0043811">
    <property type="term" value="F:phosphate:acyl-[acyl carrier protein] acyltransferase activity"/>
    <property type="evidence" value="ECO:0007669"/>
    <property type="project" value="UniProtKB-UniRule"/>
</dbReference>
<dbReference type="GO" id="GO:0006633">
    <property type="term" value="P:fatty acid biosynthetic process"/>
    <property type="evidence" value="ECO:0007669"/>
    <property type="project" value="UniProtKB-UniRule"/>
</dbReference>
<dbReference type="GO" id="GO:0008654">
    <property type="term" value="P:phospholipid biosynthetic process"/>
    <property type="evidence" value="ECO:0007669"/>
    <property type="project" value="UniProtKB-KW"/>
</dbReference>
<dbReference type="Gene3D" id="3.40.718.10">
    <property type="entry name" value="Isopropylmalate Dehydrogenase"/>
    <property type="match status" value="1"/>
</dbReference>
<dbReference type="HAMAP" id="MF_00019">
    <property type="entry name" value="PlsX"/>
    <property type="match status" value="1"/>
</dbReference>
<dbReference type="InterPro" id="IPR003664">
    <property type="entry name" value="FA_synthesis"/>
</dbReference>
<dbReference type="InterPro" id="IPR012281">
    <property type="entry name" value="Phospholipid_synth_PlsX-like"/>
</dbReference>
<dbReference type="NCBIfam" id="TIGR00182">
    <property type="entry name" value="plsX"/>
    <property type="match status" value="1"/>
</dbReference>
<dbReference type="PANTHER" id="PTHR30100">
    <property type="entry name" value="FATTY ACID/PHOSPHOLIPID SYNTHESIS PROTEIN PLSX"/>
    <property type="match status" value="1"/>
</dbReference>
<dbReference type="PANTHER" id="PTHR30100:SF1">
    <property type="entry name" value="PHOSPHATE ACYLTRANSFERASE"/>
    <property type="match status" value="1"/>
</dbReference>
<dbReference type="Pfam" id="PF02504">
    <property type="entry name" value="FA_synthesis"/>
    <property type="match status" value="1"/>
</dbReference>
<dbReference type="PIRSF" id="PIRSF002465">
    <property type="entry name" value="Phsphlp_syn_PlsX"/>
    <property type="match status" value="1"/>
</dbReference>
<dbReference type="SUPFAM" id="SSF53659">
    <property type="entry name" value="Isocitrate/Isopropylmalate dehydrogenase-like"/>
    <property type="match status" value="1"/>
</dbReference>
<evidence type="ECO:0000255" key="1">
    <source>
        <dbReference type="HAMAP-Rule" id="MF_00019"/>
    </source>
</evidence>
<reference key="1">
    <citation type="submission" date="2006-02" db="EMBL/GenBank/DDBJ databases">
        <title>Complete sequence of chromosome of Jannaschia sp. CCS1.</title>
        <authorList>
            <consortium name="US DOE Joint Genome Institute"/>
            <person name="Copeland A."/>
            <person name="Lucas S."/>
            <person name="Lapidus A."/>
            <person name="Barry K."/>
            <person name="Detter J.C."/>
            <person name="Glavina del Rio T."/>
            <person name="Hammon N."/>
            <person name="Israni S."/>
            <person name="Pitluck S."/>
            <person name="Brettin T."/>
            <person name="Bruce D."/>
            <person name="Han C."/>
            <person name="Tapia R."/>
            <person name="Gilna P."/>
            <person name="Chertkov O."/>
            <person name="Saunders E."/>
            <person name="Schmutz J."/>
            <person name="Larimer F."/>
            <person name="Land M."/>
            <person name="Kyrpides N."/>
            <person name="Lykidis A."/>
            <person name="Moran M.A."/>
            <person name="Belas R."/>
            <person name="Ye W."/>
            <person name="Buchan A."/>
            <person name="Gonzalez J.M."/>
            <person name="Schell M.A."/>
            <person name="Richardson P."/>
        </authorList>
    </citation>
    <scope>NUCLEOTIDE SEQUENCE [LARGE SCALE GENOMIC DNA]</scope>
    <source>
        <strain>CCS1</strain>
    </source>
</reference>
<sequence>MSDGAALTEDAVGDTVLSIDAMGGDLGPASVVSGLAKASAKNPTLRFIVHGDKPELERLIAKKRGLADVCELRHTKDVVTMDAKPSHVMRNGKDTSMWSTIEAVRDGDASVAVSCGNTGALMAISMIRLRKLEGVNRPAIACLWPSRNPSGFNVMLDVGADIRADAEDLLQYALMGASYARNGLDLSRPRIGLLNVGTEEHKGRAELKVAAELIDRAAPAADFEFVGFVEGSDLPSDRVDVIVTDGFTGNVALKTGEGTARLIRELLEQAFKKTPFSRVAALLAFTSLRRLSKRIDPRRVNGGVFLGLNGTVVKSHGSADPTGVAAAINLAAQLSATGFHKRLAARIAQAEAAASVAIQKEGSSE</sequence>